<accession>Q9KQZ7</accession>
<feature type="chain" id="PRO_0000214125" description="UDP-2,3-diacylglucosamine hydrolase">
    <location>
        <begin position="1"/>
        <end position="242"/>
    </location>
</feature>
<feature type="binding site" evidence="1">
    <location>
        <position position="8"/>
    </location>
    <ligand>
        <name>Mn(2+)</name>
        <dbReference type="ChEBI" id="CHEBI:29035"/>
        <label>1</label>
    </ligand>
</feature>
<feature type="binding site" evidence="1">
    <location>
        <position position="10"/>
    </location>
    <ligand>
        <name>Mn(2+)</name>
        <dbReference type="ChEBI" id="CHEBI:29035"/>
        <label>1</label>
    </ligand>
</feature>
<feature type="binding site" evidence="1">
    <location>
        <position position="41"/>
    </location>
    <ligand>
        <name>Mn(2+)</name>
        <dbReference type="ChEBI" id="CHEBI:29035"/>
        <label>1</label>
    </ligand>
</feature>
<feature type="binding site" evidence="1">
    <location>
        <position position="41"/>
    </location>
    <ligand>
        <name>Mn(2+)</name>
        <dbReference type="ChEBI" id="CHEBI:29035"/>
        <label>2</label>
    </ligand>
</feature>
<feature type="binding site" evidence="1">
    <location>
        <begin position="79"/>
        <end position="80"/>
    </location>
    <ligand>
        <name>substrate</name>
    </ligand>
</feature>
<feature type="binding site" evidence="1">
    <location>
        <position position="79"/>
    </location>
    <ligand>
        <name>Mn(2+)</name>
        <dbReference type="ChEBI" id="CHEBI:29035"/>
        <label>2</label>
    </ligand>
</feature>
<feature type="binding site" evidence="1">
    <location>
        <position position="114"/>
    </location>
    <ligand>
        <name>Mn(2+)</name>
        <dbReference type="ChEBI" id="CHEBI:29035"/>
        <label>2</label>
    </ligand>
</feature>
<feature type="binding site" evidence="1">
    <location>
        <position position="122"/>
    </location>
    <ligand>
        <name>substrate</name>
    </ligand>
</feature>
<feature type="binding site" evidence="1">
    <location>
        <position position="164"/>
    </location>
    <ligand>
        <name>substrate</name>
    </ligand>
</feature>
<feature type="binding site" evidence="1">
    <location>
        <position position="167"/>
    </location>
    <ligand>
        <name>substrate</name>
    </ligand>
</feature>
<feature type="binding site" evidence="1">
    <location>
        <position position="195"/>
    </location>
    <ligand>
        <name>Mn(2+)</name>
        <dbReference type="ChEBI" id="CHEBI:29035"/>
        <label>2</label>
    </ligand>
</feature>
<feature type="binding site" evidence="1">
    <location>
        <position position="195"/>
    </location>
    <ligand>
        <name>substrate</name>
    </ligand>
</feature>
<feature type="binding site" evidence="1">
    <location>
        <position position="197"/>
    </location>
    <ligand>
        <name>Mn(2+)</name>
        <dbReference type="ChEBI" id="CHEBI:29035"/>
        <label>1</label>
    </ligand>
</feature>
<keyword id="KW-0997">Cell inner membrane</keyword>
<keyword id="KW-1003">Cell membrane</keyword>
<keyword id="KW-0378">Hydrolase</keyword>
<keyword id="KW-0441">Lipid A biosynthesis</keyword>
<keyword id="KW-0444">Lipid biosynthesis</keyword>
<keyword id="KW-0443">Lipid metabolism</keyword>
<keyword id="KW-0464">Manganese</keyword>
<keyword id="KW-0472">Membrane</keyword>
<keyword id="KW-0479">Metal-binding</keyword>
<keyword id="KW-1185">Reference proteome</keyword>
<comment type="function">
    <text evidence="1">Hydrolyzes the pyrophosphate bond of UDP-2,3-diacylglucosamine to yield 2,3-diacylglucosamine 1-phosphate (lipid X) and UMP by catalyzing the attack of water at the alpha-P atom. Involved in the biosynthesis of lipid A, a phosphorylated glycolipid that anchors the lipopolysaccharide to the outer membrane of the cell.</text>
</comment>
<comment type="catalytic activity">
    <reaction evidence="1">
        <text>UDP-2-N,3-O-bis[(3R)-3-hydroxytetradecanoyl]-alpha-D-glucosamine + H2O = 2-N,3-O-bis[(3R)-3-hydroxytetradecanoyl]-alpha-D-glucosaminyl 1-phosphate + UMP + 2 H(+)</text>
        <dbReference type="Rhea" id="RHEA:25213"/>
        <dbReference type="ChEBI" id="CHEBI:15377"/>
        <dbReference type="ChEBI" id="CHEBI:15378"/>
        <dbReference type="ChEBI" id="CHEBI:57865"/>
        <dbReference type="ChEBI" id="CHEBI:57957"/>
        <dbReference type="ChEBI" id="CHEBI:78847"/>
        <dbReference type="EC" id="3.6.1.54"/>
    </reaction>
</comment>
<comment type="cofactor">
    <cofactor evidence="1">
        <name>Mn(2+)</name>
        <dbReference type="ChEBI" id="CHEBI:29035"/>
    </cofactor>
    <text evidence="1">Binds 2 Mn(2+) ions per subunit in a binuclear metal center.</text>
</comment>
<comment type="pathway">
    <text evidence="1">Glycolipid biosynthesis; lipid IV(A) biosynthesis; lipid IV(A) from (3R)-3-hydroxytetradecanoyl-[acyl-carrier-protein] and UDP-N-acetyl-alpha-D-glucosamine: step 4/6.</text>
</comment>
<comment type="subcellular location">
    <subcellularLocation>
        <location evidence="1">Cell inner membrane</location>
        <topology evidence="1">Peripheral membrane protein</topology>
        <orientation evidence="1">Cytoplasmic side</orientation>
    </subcellularLocation>
</comment>
<comment type="similarity">
    <text evidence="1">Belongs to the LpxH family.</text>
</comment>
<protein>
    <recommendedName>
        <fullName evidence="1">UDP-2,3-diacylglucosamine hydrolase</fullName>
        <ecNumber evidence="1">3.6.1.54</ecNumber>
    </recommendedName>
    <alternativeName>
        <fullName evidence="1">UDP-2,3-diacylglucosamine diphosphatase</fullName>
    </alternativeName>
</protein>
<gene>
    <name evidence="1" type="primary">lpxH</name>
    <name type="ordered locus">VC_1850</name>
</gene>
<organism>
    <name type="scientific">Vibrio cholerae serotype O1 (strain ATCC 39315 / El Tor Inaba N16961)</name>
    <dbReference type="NCBI Taxonomy" id="243277"/>
    <lineage>
        <taxon>Bacteria</taxon>
        <taxon>Pseudomonadati</taxon>
        <taxon>Pseudomonadota</taxon>
        <taxon>Gammaproteobacteria</taxon>
        <taxon>Vibrionales</taxon>
        <taxon>Vibrionaceae</taxon>
        <taxon>Vibrio</taxon>
    </lineage>
</organism>
<reference key="1">
    <citation type="journal article" date="2000" name="Nature">
        <title>DNA sequence of both chromosomes of the cholera pathogen Vibrio cholerae.</title>
        <authorList>
            <person name="Heidelberg J.F."/>
            <person name="Eisen J.A."/>
            <person name="Nelson W.C."/>
            <person name="Clayton R.A."/>
            <person name="Gwinn M.L."/>
            <person name="Dodson R.J."/>
            <person name="Haft D.H."/>
            <person name="Hickey E.K."/>
            <person name="Peterson J.D."/>
            <person name="Umayam L.A."/>
            <person name="Gill S.R."/>
            <person name="Nelson K.E."/>
            <person name="Read T.D."/>
            <person name="Tettelin H."/>
            <person name="Richardson D.L."/>
            <person name="Ermolaeva M.D."/>
            <person name="Vamathevan J.J."/>
            <person name="Bass S."/>
            <person name="Qin H."/>
            <person name="Dragoi I."/>
            <person name="Sellers P."/>
            <person name="McDonald L.A."/>
            <person name="Utterback T.R."/>
            <person name="Fleischmann R.D."/>
            <person name="Nierman W.C."/>
            <person name="White O."/>
            <person name="Salzberg S.L."/>
            <person name="Smith H.O."/>
            <person name="Colwell R.R."/>
            <person name="Mekalanos J.J."/>
            <person name="Venter J.C."/>
            <person name="Fraser C.M."/>
        </authorList>
    </citation>
    <scope>NUCLEOTIDE SEQUENCE [LARGE SCALE GENOMIC DNA]</scope>
    <source>
        <strain>ATCC 39315 / El Tor Inaba N16961</strain>
    </source>
</reference>
<evidence type="ECO:0000255" key="1">
    <source>
        <dbReference type="HAMAP-Rule" id="MF_00575"/>
    </source>
</evidence>
<name>LPXH_VIBCH</name>
<sequence length="242" mass="28031">MHTLFISDLHLSPKHPDITASFIQFMREEAIKADALYVLGDLFDFWIGDDDPTTFAEQIKSEFRQLTQQGVPCYFTKGNRDFLVGKRFAQQTGVQLLPDEAVIDLYGQKAVVLHGDTLCTQDTRYLEFRAKVHQPWLQRLFGLLPFALKQKLVRKIQSDIRDDKQHKSMMIMDVTPSEVIAVMHRYNVDLMIHGHTHRPAIHSIQTDDQTLKTRIVLGDWYSQSSILVYSKQLATHYCRDHS</sequence>
<dbReference type="EC" id="3.6.1.54" evidence="1"/>
<dbReference type="EMBL" id="AE003852">
    <property type="protein sequence ID" value="AAF94998.1"/>
    <property type="molecule type" value="Genomic_DNA"/>
</dbReference>
<dbReference type="PIR" id="C82150">
    <property type="entry name" value="C82150"/>
</dbReference>
<dbReference type="RefSeq" id="NP_231484.1">
    <property type="nucleotide sequence ID" value="NC_002505.1"/>
</dbReference>
<dbReference type="SMR" id="Q9KQZ7"/>
<dbReference type="STRING" id="243277.VC_1850"/>
<dbReference type="EnsemblBacteria" id="AAF94998">
    <property type="protein sequence ID" value="AAF94998"/>
    <property type="gene ID" value="VC_1850"/>
</dbReference>
<dbReference type="KEGG" id="vch:VC_1850"/>
<dbReference type="PATRIC" id="fig|243277.26.peg.1766"/>
<dbReference type="eggNOG" id="COG2908">
    <property type="taxonomic scope" value="Bacteria"/>
</dbReference>
<dbReference type="HOGENOM" id="CLU_074586_0_0_6"/>
<dbReference type="BioCyc" id="MetaCyc:FY484_RS09260-MONOMER"/>
<dbReference type="UniPathway" id="UPA00359">
    <property type="reaction ID" value="UER00480"/>
</dbReference>
<dbReference type="Proteomes" id="UP000000584">
    <property type="component" value="Chromosome 1"/>
</dbReference>
<dbReference type="GO" id="GO:0005737">
    <property type="term" value="C:cytoplasm"/>
    <property type="evidence" value="ECO:0007669"/>
    <property type="project" value="InterPro"/>
</dbReference>
<dbReference type="GO" id="GO:0019897">
    <property type="term" value="C:extrinsic component of plasma membrane"/>
    <property type="evidence" value="ECO:0007669"/>
    <property type="project" value="UniProtKB-UniRule"/>
</dbReference>
<dbReference type="GO" id="GO:0030145">
    <property type="term" value="F:manganese ion binding"/>
    <property type="evidence" value="ECO:0007669"/>
    <property type="project" value="UniProtKB-UniRule"/>
</dbReference>
<dbReference type="GO" id="GO:0008758">
    <property type="term" value="F:UDP-2,3-diacylglucosamine hydrolase activity"/>
    <property type="evidence" value="ECO:0000318"/>
    <property type="project" value="GO_Central"/>
</dbReference>
<dbReference type="GO" id="GO:0009245">
    <property type="term" value="P:lipid A biosynthetic process"/>
    <property type="evidence" value="ECO:0000318"/>
    <property type="project" value="GO_Central"/>
</dbReference>
<dbReference type="CDD" id="cd07398">
    <property type="entry name" value="MPP_YbbF-LpxH"/>
    <property type="match status" value="1"/>
</dbReference>
<dbReference type="FunFam" id="3.60.21.10:FF:000074">
    <property type="entry name" value="UDP-2,3-diacylglucosamine hydrolase"/>
    <property type="match status" value="1"/>
</dbReference>
<dbReference type="Gene3D" id="3.60.21.10">
    <property type="match status" value="1"/>
</dbReference>
<dbReference type="HAMAP" id="MF_00575">
    <property type="entry name" value="LpxH"/>
    <property type="match status" value="1"/>
</dbReference>
<dbReference type="InterPro" id="IPR004843">
    <property type="entry name" value="Calcineurin-like_PHP_ApaH"/>
</dbReference>
<dbReference type="InterPro" id="IPR043461">
    <property type="entry name" value="LpxH-like"/>
</dbReference>
<dbReference type="InterPro" id="IPR029052">
    <property type="entry name" value="Metallo-depent_PP-like"/>
</dbReference>
<dbReference type="InterPro" id="IPR010138">
    <property type="entry name" value="UDP-diacylglucosamine_Hdrlase"/>
</dbReference>
<dbReference type="NCBIfam" id="TIGR01854">
    <property type="entry name" value="lipid_A_lpxH"/>
    <property type="match status" value="1"/>
</dbReference>
<dbReference type="NCBIfam" id="NF003743">
    <property type="entry name" value="PRK05340.1"/>
    <property type="match status" value="1"/>
</dbReference>
<dbReference type="PANTHER" id="PTHR34990:SF1">
    <property type="entry name" value="UDP-2,3-DIACYLGLUCOSAMINE HYDROLASE"/>
    <property type="match status" value="1"/>
</dbReference>
<dbReference type="PANTHER" id="PTHR34990">
    <property type="entry name" value="UDP-2,3-DIACYLGLUCOSAMINE HYDROLASE-RELATED"/>
    <property type="match status" value="1"/>
</dbReference>
<dbReference type="Pfam" id="PF00149">
    <property type="entry name" value="Metallophos"/>
    <property type="match status" value="1"/>
</dbReference>
<dbReference type="SUPFAM" id="SSF56300">
    <property type="entry name" value="Metallo-dependent phosphatases"/>
    <property type="match status" value="1"/>
</dbReference>
<proteinExistence type="inferred from homology"/>